<organism>
    <name type="scientific">Staphylococcus aureus (strain MW2)</name>
    <dbReference type="NCBI Taxonomy" id="196620"/>
    <lineage>
        <taxon>Bacteria</taxon>
        <taxon>Bacillati</taxon>
        <taxon>Bacillota</taxon>
        <taxon>Bacilli</taxon>
        <taxon>Bacillales</taxon>
        <taxon>Staphylococcaceae</taxon>
        <taxon>Staphylococcus</taxon>
    </lineage>
</organism>
<comment type="function">
    <text evidence="1">Mnh complex is a Na(+)/H(+) antiporter involved in Na(+) excretion.</text>
</comment>
<comment type="subunit">
    <text evidence="1">May form a heterooligomeric complex that consists of seven subunits: mnhA1, mnhB1, mnhC1, mnhD1, mnhE1, mnhF1 and mnhG1.</text>
</comment>
<comment type="subcellular location">
    <subcellularLocation>
        <location evidence="3">Cell membrane</location>
        <topology evidence="3">Multi-pass membrane protein</topology>
    </subcellularLocation>
</comment>
<comment type="similarity">
    <text evidence="3">Belongs to the CPA3 antiporters (TC 2.A.63) subunit F family.</text>
</comment>
<protein>
    <recommendedName>
        <fullName>Na(+)/H(+) antiporter subunit F1</fullName>
    </recommendedName>
    <alternativeName>
        <fullName>Mnh complex subunit F1</fullName>
    </alternativeName>
</protein>
<dbReference type="EMBL" id="BA000033">
    <property type="protein sequence ID" value="BAB94694.1"/>
    <property type="molecule type" value="Genomic_DNA"/>
</dbReference>
<dbReference type="PIR" id="D89861">
    <property type="entry name" value="D89861"/>
</dbReference>
<dbReference type="RefSeq" id="WP_001016306.1">
    <property type="nucleotide sequence ID" value="NC_003923.1"/>
</dbReference>
<dbReference type="SMR" id="P60695"/>
<dbReference type="KEGG" id="sam:MW0829"/>
<dbReference type="HOGENOM" id="CLU_125825_1_3_9"/>
<dbReference type="GO" id="GO:0005886">
    <property type="term" value="C:plasma membrane"/>
    <property type="evidence" value="ECO:0007669"/>
    <property type="project" value="UniProtKB-SubCell"/>
</dbReference>
<dbReference type="GO" id="GO:0015385">
    <property type="term" value="F:sodium:proton antiporter activity"/>
    <property type="evidence" value="ECO:0007669"/>
    <property type="project" value="TreeGrafter"/>
</dbReference>
<dbReference type="InterPro" id="IPR007208">
    <property type="entry name" value="MrpF/PhaF-like"/>
</dbReference>
<dbReference type="NCBIfam" id="NF009248">
    <property type="entry name" value="PRK12600.1"/>
    <property type="match status" value="1"/>
</dbReference>
<dbReference type="PANTHER" id="PTHR34702">
    <property type="entry name" value="NA(+)/H(+) ANTIPORTER SUBUNIT F1"/>
    <property type="match status" value="1"/>
</dbReference>
<dbReference type="PANTHER" id="PTHR34702:SF1">
    <property type="entry name" value="NA(+)_H(+) ANTIPORTER SUBUNIT F"/>
    <property type="match status" value="1"/>
</dbReference>
<dbReference type="Pfam" id="PF04066">
    <property type="entry name" value="MrpF_PhaF"/>
    <property type="match status" value="1"/>
</dbReference>
<dbReference type="PIRSF" id="PIRSF028784">
    <property type="entry name" value="MrpF"/>
    <property type="match status" value="1"/>
</dbReference>
<name>MNHF1_STAAW</name>
<reference key="1">
    <citation type="journal article" date="2002" name="Lancet">
        <title>Genome and virulence determinants of high virulence community-acquired MRSA.</title>
        <authorList>
            <person name="Baba T."/>
            <person name="Takeuchi F."/>
            <person name="Kuroda M."/>
            <person name="Yuzawa H."/>
            <person name="Aoki K."/>
            <person name="Oguchi A."/>
            <person name="Nagai Y."/>
            <person name="Iwama N."/>
            <person name="Asano K."/>
            <person name="Naimi T."/>
            <person name="Kuroda H."/>
            <person name="Cui L."/>
            <person name="Yamamoto K."/>
            <person name="Hiramatsu K."/>
        </authorList>
    </citation>
    <scope>NUCLEOTIDE SEQUENCE [LARGE SCALE GENOMIC DNA]</scope>
    <source>
        <strain>MW2</strain>
    </source>
</reference>
<accession>P60695</accession>
<accession>Q9ZNG1</accession>
<sequence length="97" mass="10616">MNHNVIIVIALIIVVISMLAMLIRVVLGPSLADRVVALDAIGLQLMAVIALFSILLNIKYMIVVIMMIGILAFLGTAVFSKFMDKGKVIEHDQNHTD</sequence>
<evidence type="ECO:0000250" key="1"/>
<evidence type="ECO:0000255" key="2"/>
<evidence type="ECO:0000305" key="3"/>
<keyword id="KW-0050">Antiport</keyword>
<keyword id="KW-1003">Cell membrane</keyword>
<keyword id="KW-0375">Hydrogen ion transport</keyword>
<keyword id="KW-0406">Ion transport</keyword>
<keyword id="KW-0472">Membrane</keyword>
<keyword id="KW-0915">Sodium</keyword>
<keyword id="KW-0739">Sodium transport</keyword>
<keyword id="KW-0812">Transmembrane</keyword>
<keyword id="KW-1133">Transmembrane helix</keyword>
<keyword id="KW-0813">Transport</keyword>
<feature type="chain" id="PRO_0000087741" description="Na(+)/H(+) antiporter subunit F1">
    <location>
        <begin position="1"/>
        <end position="97"/>
    </location>
</feature>
<feature type="transmembrane region" description="Helical" evidence="2">
    <location>
        <begin position="5"/>
        <end position="27"/>
    </location>
</feature>
<feature type="transmembrane region" description="Helical" evidence="2">
    <location>
        <begin position="34"/>
        <end position="56"/>
    </location>
</feature>
<feature type="transmembrane region" description="Helical" evidence="2">
    <location>
        <begin position="60"/>
        <end position="82"/>
    </location>
</feature>
<proteinExistence type="inferred from homology"/>
<gene>
    <name type="primary">mnhF1</name>
    <name type="ordered locus">MW0829</name>
</gene>